<accession>B8GX51</accession>
<feature type="chain" id="PRO_1000192386" description="Protein-L-isoaspartate O-methyltransferase">
    <location>
        <begin position="1"/>
        <end position="222"/>
    </location>
</feature>
<feature type="active site" evidence="1">
    <location>
        <position position="69"/>
    </location>
</feature>
<name>PIMT_CAUVN</name>
<keyword id="KW-0963">Cytoplasm</keyword>
<keyword id="KW-0489">Methyltransferase</keyword>
<keyword id="KW-1185">Reference proteome</keyword>
<keyword id="KW-0949">S-adenosyl-L-methionine</keyword>
<keyword id="KW-0808">Transferase</keyword>
<organism>
    <name type="scientific">Caulobacter vibrioides (strain NA1000 / CB15N)</name>
    <name type="common">Caulobacter crescentus</name>
    <dbReference type="NCBI Taxonomy" id="565050"/>
    <lineage>
        <taxon>Bacteria</taxon>
        <taxon>Pseudomonadati</taxon>
        <taxon>Pseudomonadota</taxon>
        <taxon>Alphaproteobacteria</taxon>
        <taxon>Caulobacterales</taxon>
        <taxon>Caulobacteraceae</taxon>
        <taxon>Caulobacter</taxon>
    </lineage>
</organism>
<gene>
    <name evidence="1" type="primary">pcm</name>
    <name type="ordered locus">CCNA_02076</name>
</gene>
<protein>
    <recommendedName>
        <fullName evidence="1">Protein-L-isoaspartate O-methyltransferase</fullName>
        <ecNumber evidence="1">2.1.1.77</ecNumber>
    </recommendedName>
    <alternativeName>
        <fullName evidence="1">L-isoaspartyl protein carboxyl methyltransferase</fullName>
    </alternativeName>
    <alternativeName>
        <fullName evidence="1">Protein L-isoaspartyl methyltransferase</fullName>
    </alternativeName>
    <alternativeName>
        <fullName evidence="1">Protein-beta-aspartate methyltransferase</fullName>
        <shortName evidence="1">PIMT</shortName>
    </alternativeName>
</protein>
<evidence type="ECO:0000255" key="1">
    <source>
        <dbReference type="HAMAP-Rule" id="MF_00090"/>
    </source>
</evidence>
<sequence>MSGGTTKAAENAKADLPRLMKALRDQGVTDPQVLKAIETTPRDLFTPDLFKDRSWEDSALPIACGQTISQPYIVGLMTQALTVEPRSRVLEIGTGSGYQTTILSKVSRLVYTIERYRTLMKEAEARFNTLGLTNVITKFGDGGEGWAEQAPFDRIMVTAAAEDDPKRLLSQLKPNGVLVAPVGKGPVQSLRRYAGDGKGGFRVEILCDVRFVPLLAGVAKDQ</sequence>
<reference key="1">
    <citation type="journal article" date="2010" name="J. Bacteriol.">
        <title>The genetic basis of laboratory adaptation in Caulobacter crescentus.</title>
        <authorList>
            <person name="Marks M.E."/>
            <person name="Castro-Rojas C.M."/>
            <person name="Teiling C."/>
            <person name="Du L."/>
            <person name="Kapatral V."/>
            <person name="Walunas T.L."/>
            <person name="Crosson S."/>
        </authorList>
    </citation>
    <scope>NUCLEOTIDE SEQUENCE [LARGE SCALE GENOMIC DNA]</scope>
    <source>
        <strain>NA1000 / CB15N</strain>
    </source>
</reference>
<comment type="function">
    <text evidence="1">Catalyzes the methyl esterification of L-isoaspartyl residues in peptides and proteins that result from spontaneous decomposition of normal L-aspartyl and L-asparaginyl residues. It plays a role in the repair and/or degradation of damaged proteins.</text>
</comment>
<comment type="catalytic activity">
    <reaction evidence="1">
        <text>[protein]-L-isoaspartate + S-adenosyl-L-methionine = [protein]-L-isoaspartate alpha-methyl ester + S-adenosyl-L-homocysteine</text>
        <dbReference type="Rhea" id="RHEA:12705"/>
        <dbReference type="Rhea" id="RHEA-COMP:12143"/>
        <dbReference type="Rhea" id="RHEA-COMP:12144"/>
        <dbReference type="ChEBI" id="CHEBI:57856"/>
        <dbReference type="ChEBI" id="CHEBI:59789"/>
        <dbReference type="ChEBI" id="CHEBI:90596"/>
        <dbReference type="ChEBI" id="CHEBI:90598"/>
        <dbReference type="EC" id="2.1.1.77"/>
    </reaction>
</comment>
<comment type="subcellular location">
    <subcellularLocation>
        <location evidence="1">Cytoplasm</location>
    </subcellularLocation>
</comment>
<comment type="similarity">
    <text evidence="1">Belongs to the methyltransferase superfamily. L-isoaspartyl/D-aspartyl protein methyltransferase family.</text>
</comment>
<proteinExistence type="inferred from homology"/>
<dbReference type="EC" id="2.1.1.77" evidence="1"/>
<dbReference type="EMBL" id="CP001340">
    <property type="protein sequence ID" value="ACL95541.1"/>
    <property type="molecule type" value="Genomic_DNA"/>
</dbReference>
<dbReference type="RefSeq" id="WP_010919863.1">
    <property type="nucleotide sequence ID" value="NC_011916.1"/>
</dbReference>
<dbReference type="RefSeq" id="YP_002517449.1">
    <property type="nucleotide sequence ID" value="NC_011916.1"/>
</dbReference>
<dbReference type="SMR" id="B8GX51"/>
<dbReference type="GeneID" id="7330382"/>
<dbReference type="KEGG" id="ccs:CCNA_02076"/>
<dbReference type="PATRIC" id="fig|565050.3.peg.2034"/>
<dbReference type="HOGENOM" id="CLU_055432_2_0_5"/>
<dbReference type="OrthoDB" id="9810066at2"/>
<dbReference type="PhylomeDB" id="B8GX51"/>
<dbReference type="Proteomes" id="UP000001364">
    <property type="component" value="Chromosome"/>
</dbReference>
<dbReference type="GO" id="GO:0005737">
    <property type="term" value="C:cytoplasm"/>
    <property type="evidence" value="ECO:0007669"/>
    <property type="project" value="UniProtKB-SubCell"/>
</dbReference>
<dbReference type="GO" id="GO:0004719">
    <property type="term" value="F:protein-L-isoaspartate (D-aspartate) O-methyltransferase activity"/>
    <property type="evidence" value="ECO:0007669"/>
    <property type="project" value="UniProtKB-UniRule"/>
</dbReference>
<dbReference type="GO" id="GO:0032259">
    <property type="term" value="P:methylation"/>
    <property type="evidence" value="ECO:0007669"/>
    <property type="project" value="UniProtKB-KW"/>
</dbReference>
<dbReference type="GO" id="GO:0036211">
    <property type="term" value="P:protein modification process"/>
    <property type="evidence" value="ECO:0007669"/>
    <property type="project" value="UniProtKB-UniRule"/>
</dbReference>
<dbReference type="GO" id="GO:0030091">
    <property type="term" value="P:protein repair"/>
    <property type="evidence" value="ECO:0007669"/>
    <property type="project" value="UniProtKB-UniRule"/>
</dbReference>
<dbReference type="CDD" id="cd02440">
    <property type="entry name" value="AdoMet_MTases"/>
    <property type="match status" value="1"/>
</dbReference>
<dbReference type="FunFam" id="3.40.50.150:FF:000010">
    <property type="entry name" value="Protein-L-isoaspartate O-methyltransferase"/>
    <property type="match status" value="1"/>
</dbReference>
<dbReference type="Gene3D" id="3.40.50.150">
    <property type="entry name" value="Vaccinia Virus protein VP39"/>
    <property type="match status" value="1"/>
</dbReference>
<dbReference type="HAMAP" id="MF_00090">
    <property type="entry name" value="PIMT"/>
    <property type="match status" value="1"/>
</dbReference>
<dbReference type="InterPro" id="IPR000682">
    <property type="entry name" value="PCMT"/>
</dbReference>
<dbReference type="InterPro" id="IPR029063">
    <property type="entry name" value="SAM-dependent_MTases_sf"/>
</dbReference>
<dbReference type="NCBIfam" id="TIGR00080">
    <property type="entry name" value="pimt"/>
    <property type="match status" value="1"/>
</dbReference>
<dbReference type="NCBIfam" id="NF001453">
    <property type="entry name" value="PRK00312.1"/>
    <property type="match status" value="1"/>
</dbReference>
<dbReference type="PANTHER" id="PTHR11579">
    <property type="entry name" value="PROTEIN-L-ISOASPARTATE O-METHYLTRANSFERASE"/>
    <property type="match status" value="1"/>
</dbReference>
<dbReference type="PANTHER" id="PTHR11579:SF0">
    <property type="entry name" value="PROTEIN-L-ISOASPARTATE(D-ASPARTATE) O-METHYLTRANSFERASE"/>
    <property type="match status" value="1"/>
</dbReference>
<dbReference type="Pfam" id="PF01135">
    <property type="entry name" value="PCMT"/>
    <property type="match status" value="1"/>
</dbReference>
<dbReference type="SUPFAM" id="SSF53335">
    <property type="entry name" value="S-adenosyl-L-methionine-dependent methyltransferases"/>
    <property type="match status" value="1"/>
</dbReference>
<dbReference type="PROSITE" id="PS01279">
    <property type="entry name" value="PCMT"/>
    <property type="match status" value="1"/>
</dbReference>